<organism>
    <name type="scientific">Escherichia coli O6:H1 (strain CFT073 / ATCC 700928 / UPEC)</name>
    <dbReference type="NCBI Taxonomy" id="199310"/>
    <lineage>
        <taxon>Bacteria</taxon>
        <taxon>Pseudomonadati</taxon>
        <taxon>Pseudomonadota</taxon>
        <taxon>Gammaproteobacteria</taxon>
        <taxon>Enterobacterales</taxon>
        <taxon>Enterobacteriaceae</taxon>
        <taxon>Escherichia</taxon>
    </lineage>
</organism>
<dbReference type="EC" id="1.1.1.86" evidence="2"/>
<dbReference type="EMBL" id="AE014075">
    <property type="protein sequence ID" value="AAN83128.1"/>
    <property type="status" value="ALT_INIT"/>
    <property type="molecule type" value="Genomic_DNA"/>
</dbReference>
<dbReference type="RefSeq" id="WP_000024951.1">
    <property type="nucleotide sequence ID" value="NZ_CP051263.1"/>
</dbReference>
<dbReference type="SMR" id="Q8FBR2"/>
<dbReference type="STRING" id="199310.c4696"/>
<dbReference type="GeneID" id="75204765"/>
<dbReference type="KEGG" id="ecc:c4696"/>
<dbReference type="eggNOG" id="COG0059">
    <property type="taxonomic scope" value="Bacteria"/>
</dbReference>
<dbReference type="HOGENOM" id="CLU_551905_0_0_6"/>
<dbReference type="UniPathway" id="UPA00047">
    <property type="reaction ID" value="UER00056"/>
</dbReference>
<dbReference type="UniPathway" id="UPA00049">
    <property type="reaction ID" value="UER00060"/>
</dbReference>
<dbReference type="Proteomes" id="UP000001410">
    <property type="component" value="Chromosome"/>
</dbReference>
<dbReference type="GO" id="GO:0005829">
    <property type="term" value="C:cytosol"/>
    <property type="evidence" value="ECO:0007669"/>
    <property type="project" value="TreeGrafter"/>
</dbReference>
<dbReference type="GO" id="GO:0004455">
    <property type="term" value="F:ketol-acid reductoisomerase activity"/>
    <property type="evidence" value="ECO:0007669"/>
    <property type="project" value="UniProtKB-UniRule"/>
</dbReference>
<dbReference type="GO" id="GO:0000287">
    <property type="term" value="F:magnesium ion binding"/>
    <property type="evidence" value="ECO:0007669"/>
    <property type="project" value="UniProtKB-UniRule"/>
</dbReference>
<dbReference type="GO" id="GO:0009097">
    <property type="term" value="P:isoleucine biosynthetic process"/>
    <property type="evidence" value="ECO:0007669"/>
    <property type="project" value="UniProtKB-UniRule"/>
</dbReference>
<dbReference type="GO" id="GO:0009099">
    <property type="term" value="P:L-valine biosynthetic process"/>
    <property type="evidence" value="ECO:0007669"/>
    <property type="project" value="UniProtKB-UniRule"/>
</dbReference>
<dbReference type="FunFam" id="1.10.1040.10:FF:000007">
    <property type="entry name" value="Ketol-acid reductoisomerase (NADP(+))"/>
    <property type="match status" value="1"/>
</dbReference>
<dbReference type="FunFam" id="3.40.50.720:FF:000043">
    <property type="entry name" value="Ketol-acid reductoisomerase (NADP(+))"/>
    <property type="match status" value="1"/>
</dbReference>
<dbReference type="Gene3D" id="1.10.1040.10">
    <property type="entry name" value="N-(1-d-carboxylethyl)-l-norvaline Dehydrogenase, domain 2"/>
    <property type="match status" value="1"/>
</dbReference>
<dbReference type="Gene3D" id="3.40.50.720">
    <property type="entry name" value="NAD(P)-binding Rossmann-like Domain"/>
    <property type="match status" value="1"/>
</dbReference>
<dbReference type="HAMAP" id="MF_00435">
    <property type="entry name" value="IlvC"/>
    <property type="match status" value="1"/>
</dbReference>
<dbReference type="InterPro" id="IPR008927">
    <property type="entry name" value="6-PGluconate_DH-like_C_sf"/>
</dbReference>
<dbReference type="InterPro" id="IPR013328">
    <property type="entry name" value="6PGD_dom2"/>
</dbReference>
<dbReference type="InterPro" id="IPR013023">
    <property type="entry name" value="KARI"/>
</dbReference>
<dbReference type="InterPro" id="IPR000506">
    <property type="entry name" value="KARI_C"/>
</dbReference>
<dbReference type="InterPro" id="IPR013116">
    <property type="entry name" value="KARI_N"/>
</dbReference>
<dbReference type="InterPro" id="IPR036291">
    <property type="entry name" value="NAD(P)-bd_dom_sf"/>
</dbReference>
<dbReference type="NCBIfam" id="TIGR00465">
    <property type="entry name" value="ilvC"/>
    <property type="match status" value="1"/>
</dbReference>
<dbReference type="NCBIfam" id="NF003557">
    <property type="entry name" value="PRK05225.1"/>
    <property type="match status" value="1"/>
</dbReference>
<dbReference type="PANTHER" id="PTHR21371">
    <property type="entry name" value="KETOL-ACID REDUCTOISOMERASE, MITOCHONDRIAL"/>
    <property type="match status" value="1"/>
</dbReference>
<dbReference type="PANTHER" id="PTHR21371:SF1">
    <property type="entry name" value="KETOL-ACID REDUCTOISOMERASE, MITOCHONDRIAL"/>
    <property type="match status" value="1"/>
</dbReference>
<dbReference type="Pfam" id="PF01450">
    <property type="entry name" value="KARI_C"/>
    <property type="match status" value="2"/>
</dbReference>
<dbReference type="Pfam" id="PF07991">
    <property type="entry name" value="KARI_N"/>
    <property type="match status" value="1"/>
</dbReference>
<dbReference type="SUPFAM" id="SSF48179">
    <property type="entry name" value="6-phosphogluconate dehydrogenase C-terminal domain-like"/>
    <property type="match status" value="2"/>
</dbReference>
<dbReference type="SUPFAM" id="SSF51735">
    <property type="entry name" value="NAD(P)-binding Rossmann-fold domains"/>
    <property type="match status" value="1"/>
</dbReference>
<dbReference type="PROSITE" id="PS51851">
    <property type="entry name" value="KARI_C"/>
    <property type="match status" value="2"/>
</dbReference>
<dbReference type="PROSITE" id="PS51850">
    <property type="entry name" value="KARI_N"/>
    <property type="match status" value="1"/>
</dbReference>
<gene>
    <name evidence="2" type="primary">ilvC</name>
    <name type="ordered locus">c4696</name>
</gene>
<name>ILVC_ECOL6</name>
<keyword id="KW-0028">Amino-acid biosynthesis</keyword>
<keyword id="KW-0100">Branched-chain amino acid biosynthesis</keyword>
<keyword id="KW-0460">Magnesium</keyword>
<keyword id="KW-0479">Metal-binding</keyword>
<keyword id="KW-0521">NADP</keyword>
<keyword id="KW-0560">Oxidoreductase</keyword>
<keyword id="KW-1185">Reference proteome</keyword>
<keyword id="KW-0677">Repeat</keyword>
<reference key="1">
    <citation type="journal article" date="2002" name="Proc. Natl. Acad. Sci. U.S.A.">
        <title>Extensive mosaic structure revealed by the complete genome sequence of uropathogenic Escherichia coli.</title>
        <authorList>
            <person name="Welch R.A."/>
            <person name="Burland V."/>
            <person name="Plunkett G. III"/>
            <person name="Redford P."/>
            <person name="Roesch P."/>
            <person name="Rasko D."/>
            <person name="Buckles E.L."/>
            <person name="Liou S.-R."/>
            <person name="Boutin A."/>
            <person name="Hackett J."/>
            <person name="Stroud D."/>
            <person name="Mayhew G.F."/>
            <person name="Rose D.J."/>
            <person name="Zhou S."/>
            <person name="Schwartz D.C."/>
            <person name="Perna N.T."/>
            <person name="Mobley H.L.T."/>
            <person name="Donnenberg M.S."/>
            <person name="Blattner F.R."/>
        </authorList>
    </citation>
    <scope>NUCLEOTIDE SEQUENCE [LARGE SCALE GENOMIC DNA]</scope>
    <source>
        <strain>CFT073 / ATCC 700928 / UPEC</strain>
    </source>
</reference>
<proteinExistence type="inferred from homology"/>
<sequence>MANYFNTLNLRQQLAQLGKCRFMGRDEFADGASYLQGKKVVIVGCGAQGLNQGLNMRDSGLDISYALRKEAIAEKRASWRKATENGFKVGTYEELIPQADLVVNLTPDKQHSDVVRTVQPLMKDGAALGYSHGFNIVEVGEQIRKDITVVMVAPKCPGTEVREEYKRGFGVPTLIAVHPENDPKGEGMAIAKAWAAATGGHRAGVLESSFVAEVKSDLMGEQTILCGMLQAGSLLCFDKLVEEGTDPAYAEKLIQFGWETITEALKQGGITLMMDRLSNPAKLRAYALSEQLKEIMAPLFQKHMDDIISGEFSSGMMADWANDDKKLLTWREETGKTAFETAPQYEGKIGEQEYFDKGVLMIAMVKAGVELAFETMVDSGIIEESAYYESLHELPLIANTIARKRLYEMNVVISDTAEYGNYLFSYACVPLLKPFMAELQPGDLGKAIPEGAVDNAQLRDVNEAIRSHAIEQVGKKLRGYMTDMKRIAVAG</sequence>
<protein>
    <recommendedName>
        <fullName evidence="2">Ketol-acid reductoisomerase (NADP(+))</fullName>
        <shortName evidence="2">KARI</shortName>
        <ecNumber evidence="2">1.1.1.86</ecNumber>
    </recommendedName>
    <alternativeName>
        <fullName evidence="2">Acetohydroxy-acid isomeroreductase</fullName>
        <shortName evidence="2">AHIR</shortName>
    </alternativeName>
    <alternativeName>
        <fullName evidence="2">Alpha-keto-beta-hydroxylacyl reductoisomerase</fullName>
    </alternativeName>
    <alternativeName>
        <fullName evidence="2">Ketol-acid reductoisomerase type 2</fullName>
    </alternativeName>
    <alternativeName>
        <fullName evidence="2">Ketol-acid reductoisomerase type II</fullName>
    </alternativeName>
</protein>
<comment type="function">
    <text evidence="2">Involved in the biosynthesis of branched-chain amino acids (BCAA). Catalyzes an alkyl-migration followed by a ketol-acid reduction of (S)-2-acetolactate (S2AL) to yield (R)-2,3-dihydroxy-isovalerate. In the isomerase reaction, S2AL is rearranged via a Mg-dependent methyl migration to produce 3-hydroxy-3-methyl-2-ketobutyrate (HMKB). In the reductase reaction, this 2-ketoacid undergoes a metal-dependent reduction by NADPH to yield (R)-2,3-dihydroxy-isovalerate.</text>
</comment>
<comment type="catalytic activity">
    <reaction evidence="2">
        <text>(2R)-2,3-dihydroxy-3-methylbutanoate + NADP(+) = (2S)-2-acetolactate + NADPH + H(+)</text>
        <dbReference type="Rhea" id="RHEA:22068"/>
        <dbReference type="ChEBI" id="CHEBI:15378"/>
        <dbReference type="ChEBI" id="CHEBI:49072"/>
        <dbReference type="ChEBI" id="CHEBI:57783"/>
        <dbReference type="ChEBI" id="CHEBI:58349"/>
        <dbReference type="ChEBI" id="CHEBI:58476"/>
        <dbReference type="EC" id="1.1.1.86"/>
    </reaction>
</comment>
<comment type="catalytic activity">
    <reaction evidence="2">
        <text>(2R,3R)-2,3-dihydroxy-3-methylpentanoate + NADP(+) = (S)-2-ethyl-2-hydroxy-3-oxobutanoate + NADPH + H(+)</text>
        <dbReference type="Rhea" id="RHEA:13493"/>
        <dbReference type="ChEBI" id="CHEBI:15378"/>
        <dbReference type="ChEBI" id="CHEBI:49256"/>
        <dbReference type="ChEBI" id="CHEBI:49258"/>
        <dbReference type="ChEBI" id="CHEBI:57783"/>
        <dbReference type="ChEBI" id="CHEBI:58349"/>
        <dbReference type="EC" id="1.1.1.86"/>
    </reaction>
</comment>
<comment type="cofactor">
    <cofactor evidence="2">
        <name>Mg(2+)</name>
        <dbReference type="ChEBI" id="CHEBI:18420"/>
    </cofactor>
    <text evidence="2">Binds 2 magnesium ions per subunit.</text>
</comment>
<comment type="pathway">
    <text evidence="2">Amino-acid biosynthesis; L-isoleucine biosynthesis; L-isoleucine from 2-oxobutanoate: step 2/4.</text>
</comment>
<comment type="pathway">
    <text evidence="2">Amino-acid biosynthesis; L-valine biosynthesis; L-valine from pyruvate: step 2/4.</text>
</comment>
<comment type="similarity">
    <text evidence="2">Belongs to the ketol-acid reductoisomerase family.</text>
</comment>
<comment type="sequence caution" evidence="5">
    <conflict type="erroneous initiation">
        <sequence resource="EMBL-CDS" id="AAN83128"/>
    </conflict>
</comment>
<accession>Q8FBR2</accession>
<evidence type="ECO:0000250" key="1"/>
<evidence type="ECO:0000255" key="2">
    <source>
        <dbReference type="HAMAP-Rule" id="MF_00435"/>
    </source>
</evidence>
<evidence type="ECO:0000255" key="3">
    <source>
        <dbReference type="PROSITE-ProRule" id="PRU01197"/>
    </source>
</evidence>
<evidence type="ECO:0000255" key="4">
    <source>
        <dbReference type="PROSITE-ProRule" id="PRU01198"/>
    </source>
</evidence>
<evidence type="ECO:0000305" key="5"/>
<feature type="initiator methionine" description="Removed" evidence="1">
    <location>
        <position position="1"/>
    </location>
</feature>
<feature type="chain" id="PRO_0000151310" description="Ketol-acid reductoisomerase (NADP(+))">
    <location>
        <begin position="2"/>
        <end position="491"/>
    </location>
</feature>
<feature type="domain" description="KARI N-terminal Rossmann" evidence="3">
    <location>
        <begin position="15"/>
        <end position="208"/>
    </location>
</feature>
<feature type="domain" description="KARI C-terminal knotted 1" evidence="4">
    <location>
        <begin position="209"/>
        <end position="344"/>
    </location>
</feature>
<feature type="domain" description="KARI C-terminal knotted 2" evidence="4">
    <location>
        <begin position="345"/>
        <end position="484"/>
    </location>
</feature>
<feature type="active site" evidence="2">
    <location>
        <position position="132"/>
    </location>
</feature>
<feature type="binding site" evidence="2">
    <location>
        <begin position="45"/>
        <end position="48"/>
    </location>
    <ligand>
        <name>NADP(+)</name>
        <dbReference type="ChEBI" id="CHEBI:58349"/>
    </ligand>
</feature>
<feature type="binding site" evidence="2">
    <location>
        <position position="68"/>
    </location>
    <ligand>
        <name>NADP(+)</name>
        <dbReference type="ChEBI" id="CHEBI:58349"/>
    </ligand>
</feature>
<feature type="binding site" evidence="2">
    <location>
        <position position="76"/>
    </location>
    <ligand>
        <name>NADP(+)</name>
        <dbReference type="ChEBI" id="CHEBI:58349"/>
    </ligand>
</feature>
<feature type="binding site" evidence="2">
    <location>
        <position position="78"/>
    </location>
    <ligand>
        <name>NADP(+)</name>
        <dbReference type="ChEBI" id="CHEBI:58349"/>
    </ligand>
</feature>
<feature type="binding site" evidence="2">
    <location>
        <begin position="108"/>
        <end position="110"/>
    </location>
    <ligand>
        <name>NADP(+)</name>
        <dbReference type="ChEBI" id="CHEBI:58349"/>
    </ligand>
</feature>
<feature type="binding site" evidence="2">
    <location>
        <position position="158"/>
    </location>
    <ligand>
        <name>NADP(+)</name>
        <dbReference type="ChEBI" id="CHEBI:58349"/>
    </ligand>
</feature>
<feature type="binding site" evidence="2">
    <location>
        <position position="217"/>
    </location>
    <ligand>
        <name>Mg(2+)</name>
        <dbReference type="ChEBI" id="CHEBI:18420"/>
        <label>1</label>
    </ligand>
</feature>
<feature type="binding site" evidence="2">
    <location>
        <position position="217"/>
    </location>
    <ligand>
        <name>Mg(2+)</name>
        <dbReference type="ChEBI" id="CHEBI:18420"/>
        <label>2</label>
    </ligand>
</feature>
<feature type="binding site" evidence="2">
    <location>
        <position position="221"/>
    </location>
    <ligand>
        <name>Mg(2+)</name>
        <dbReference type="ChEBI" id="CHEBI:18420"/>
        <label>1</label>
    </ligand>
</feature>
<feature type="binding site" evidence="2">
    <location>
        <position position="389"/>
    </location>
    <ligand>
        <name>Mg(2+)</name>
        <dbReference type="ChEBI" id="CHEBI:18420"/>
        <label>2</label>
    </ligand>
</feature>
<feature type="binding site" evidence="2">
    <location>
        <position position="393"/>
    </location>
    <ligand>
        <name>Mg(2+)</name>
        <dbReference type="ChEBI" id="CHEBI:18420"/>
        <label>2</label>
    </ligand>
</feature>
<feature type="binding site" evidence="2">
    <location>
        <position position="414"/>
    </location>
    <ligand>
        <name>substrate</name>
    </ligand>
</feature>